<name>VINC_OSCPE</name>
<sequence>MPVKFHTKTLESVIDPVAQQVGQLVLFHEQAESGLLKEDLTPLVQGVGIAVTNLVQVAASMVETSNDEDFKAELPPSMQEVQQAAVFLSDAARLLKADQGSPEGKRKLLDGARGVINGMSDLLMCADRSEVRKMVKVCRSVQEYLDVAKVIDVEADLATFLQNLTPGMTSMMKVVEQRHPELTNLAHAQMLKSELGTVREQIPILISSIRVCCLVIVKDGSSGMKDAAFGRDYVIQKLFIAIEEIIRVLQLTTTFEEEEVGGAGAASAASLAHMFHQAQDALASGDISRSTLDAVRKCISEGRRVAALAATDETRAKLLAAADELDQILKELEELQAKGLGDSRQARALAHAAAVKLQELEQEIRKALAERVATDFVNVGGPIKALEDAALASPSDPNRQANFAQKAKEFEAHTARLADTAELVASSGGCSDAVAAELRKEAAKLRDISTAVVPAARVVLENPGNQAAKDYLRTVKEKWLEAAESMGRSVDGVIDSLEFMKVSEARIQADVKEAKRIALAEEDSMKLIAKASSVARQANRVIQVAKVEADNSENPEFVAKLSSASESLAKSISPMVIEAKAVVTSPQNKDIQRKFCSSADKVVEGVAAVRSVIEDNWVPPRPPLPELEEEEEPPELPPPPEDPASLLPAEMQEAEEMLRAPLPPKDQNPIHHAAASVFREADQWDEKGNDLISLVKQMARKMAMMSKYTRGESGEVRSKADLIRMAKEIALNAQELLKLARQIANACMDKRAKTNLLQLLDRIPTISTQLKILATVKATSMGGGDARADADATDMLVGNAENLMRTVKDVIRASEAACIRLRPDSPIASILWRKKGGQGRRISVSY</sequence>
<accession>A0A3B6UES5</accession>
<gene>
    <name evidence="6" type="primary">VIN1</name>
</gene>
<dbReference type="EMBL" id="MG852025">
    <property type="protein sequence ID" value="AYN71345.1"/>
    <property type="molecule type" value="mRNA"/>
</dbReference>
<dbReference type="PDB" id="6BFI">
    <property type="method" value="X-ray"/>
    <property type="resolution" value="2.30 A"/>
    <property type="chains" value="A/B=1-846"/>
</dbReference>
<dbReference type="PDBsum" id="6BFI"/>
<dbReference type="SMR" id="A0A3B6UES5"/>
<dbReference type="GO" id="GO:0030863">
    <property type="term" value="C:cortical cytoskeleton"/>
    <property type="evidence" value="ECO:0000314"/>
    <property type="project" value="UniProtKB"/>
</dbReference>
<dbReference type="GO" id="GO:0030175">
    <property type="term" value="C:filopodium"/>
    <property type="evidence" value="ECO:0000314"/>
    <property type="project" value="UniProtKB"/>
</dbReference>
<dbReference type="GO" id="GO:0051015">
    <property type="term" value="F:actin filament binding"/>
    <property type="evidence" value="ECO:0000314"/>
    <property type="project" value="UniProtKB"/>
</dbReference>
<dbReference type="GO" id="GO:0007155">
    <property type="term" value="P:cell adhesion"/>
    <property type="evidence" value="ECO:0007669"/>
    <property type="project" value="InterPro"/>
</dbReference>
<dbReference type="Gene3D" id="1.20.120.230">
    <property type="entry name" value="Alpha-catenin/vinculin-like"/>
    <property type="match status" value="2"/>
</dbReference>
<dbReference type="Gene3D" id="1.20.120.810">
    <property type="entry name" value="Vinculin, Vh2 four-helix bundle"/>
    <property type="match status" value="2"/>
</dbReference>
<dbReference type="InterPro" id="IPR036723">
    <property type="entry name" value="Alpha-catenin/vinculin-like_sf"/>
</dbReference>
<dbReference type="InterPro" id="IPR017997">
    <property type="entry name" value="Vinculin"/>
</dbReference>
<dbReference type="InterPro" id="IPR006077">
    <property type="entry name" value="Vinculin/catenin"/>
</dbReference>
<dbReference type="PANTHER" id="PTHR46180">
    <property type="entry name" value="VINCULIN"/>
    <property type="match status" value="1"/>
</dbReference>
<dbReference type="Pfam" id="PF01044">
    <property type="entry name" value="Vinculin"/>
    <property type="match status" value="1"/>
</dbReference>
<dbReference type="PRINTS" id="PR00806">
    <property type="entry name" value="VINCULIN"/>
</dbReference>
<dbReference type="SUPFAM" id="SSF47220">
    <property type="entry name" value="alpha-catenin/vinculin-like"/>
    <property type="match status" value="5"/>
</dbReference>
<feature type="chain" id="PRO_0000451758" description="Vinculin">
    <location>
        <begin position="1"/>
        <end position="846"/>
    </location>
</feature>
<feature type="region of interest" description="Interaction with TLN" evidence="3">
    <location>
        <begin position="1"/>
        <end position="257"/>
    </location>
</feature>
<feature type="region of interest" description="Disordered" evidence="2">
    <location>
        <begin position="617"/>
        <end position="646"/>
    </location>
</feature>
<feature type="coiled-coil region" evidence="1">
    <location>
        <begin position="315"/>
        <end position="370"/>
    </location>
</feature>
<feature type="helix" evidence="8">
    <location>
        <begin position="8"/>
        <end position="32"/>
    </location>
</feature>
<feature type="helix" evidence="8">
    <location>
        <begin position="41"/>
        <end position="59"/>
    </location>
</feature>
<feature type="turn" evidence="8">
    <location>
        <begin position="60"/>
        <end position="64"/>
    </location>
</feature>
<feature type="helix" evidence="8">
    <location>
        <begin position="68"/>
        <end position="97"/>
    </location>
</feature>
<feature type="helix" evidence="8">
    <location>
        <begin position="102"/>
        <end position="145"/>
    </location>
</feature>
<feature type="helix" evidence="8">
    <location>
        <begin position="146"/>
        <end position="150"/>
    </location>
</feature>
<feature type="helix" evidence="8">
    <location>
        <begin position="154"/>
        <end position="178"/>
    </location>
</feature>
<feature type="helix" evidence="8">
    <location>
        <begin position="179"/>
        <end position="181"/>
    </location>
</feature>
<feature type="helix" evidence="8">
    <location>
        <begin position="185"/>
        <end position="215"/>
    </location>
</feature>
<feature type="helix" evidence="8">
    <location>
        <begin position="216"/>
        <end position="218"/>
    </location>
</feature>
<feature type="helix" evidence="8">
    <location>
        <begin position="224"/>
        <end position="249"/>
    </location>
</feature>
<feature type="helix" evidence="8">
    <location>
        <begin position="255"/>
        <end position="257"/>
    </location>
</feature>
<feature type="helix" evidence="8">
    <location>
        <begin position="268"/>
        <end position="283"/>
    </location>
</feature>
<feature type="helix" evidence="8">
    <location>
        <begin position="289"/>
        <end position="306"/>
    </location>
</feature>
<feature type="helix" evidence="8">
    <location>
        <begin position="312"/>
        <end position="338"/>
    </location>
</feature>
<feature type="helix" evidence="8">
    <location>
        <begin position="344"/>
        <end position="375"/>
    </location>
</feature>
<feature type="turn" evidence="8">
    <location>
        <begin position="376"/>
        <end position="378"/>
    </location>
</feature>
<feature type="helix" evidence="8">
    <location>
        <begin position="381"/>
        <end position="390"/>
    </location>
</feature>
<feature type="helix" evidence="8">
    <location>
        <begin position="399"/>
        <end position="427"/>
    </location>
</feature>
<feature type="helix" evidence="8">
    <location>
        <begin position="432"/>
        <end position="449"/>
    </location>
</feature>
<feature type="helix" evidence="8">
    <location>
        <begin position="452"/>
        <end position="460"/>
    </location>
</feature>
<feature type="helix" evidence="8">
    <location>
        <begin position="466"/>
        <end position="493"/>
    </location>
</feature>
<feature type="helix" evidence="8">
    <location>
        <begin position="496"/>
        <end position="519"/>
    </location>
</feature>
<feature type="helix" evidence="8">
    <location>
        <begin position="524"/>
        <end position="550"/>
    </location>
</feature>
<feature type="helix" evidence="8">
    <location>
        <begin position="555"/>
        <end position="569"/>
    </location>
</feature>
<feature type="helix" evidence="8">
    <location>
        <begin position="572"/>
        <end position="584"/>
    </location>
</feature>
<feature type="helix" evidence="8">
    <location>
        <begin position="589"/>
        <end position="615"/>
    </location>
</feature>
<feature type="helix" evidence="8">
    <location>
        <begin position="649"/>
        <end position="659"/>
    </location>
</feature>
<feature type="turn" evidence="8">
    <location>
        <begin position="665"/>
        <end position="667"/>
    </location>
</feature>
<feature type="helix" evidence="8">
    <location>
        <begin position="669"/>
        <end position="682"/>
    </location>
</feature>
<feature type="helix" evidence="8">
    <location>
        <begin position="690"/>
        <end position="710"/>
    </location>
</feature>
<feature type="helix" evidence="8">
    <location>
        <begin position="718"/>
        <end position="745"/>
    </location>
</feature>
<feature type="helix" evidence="8">
    <location>
        <begin position="750"/>
        <end position="760"/>
    </location>
</feature>
<feature type="helix" evidence="8">
    <location>
        <begin position="763"/>
        <end position="778"/>
    </location>
</feature>
<feature type="strand" evidence="8">
    <location>
        <begin position="781"/>
        <end position="784"/>
    </location>
</feature>
<feature type="helix" evidence="8">
    <location>
        <begin position="786"/>
        <end position="817"/>
    </location>
</feature>
<feature type="strand" evidence="8">
    <location>
        <begin position="823"/>
        <end position="825"/>
    </location>
</feature>
<feature type="helix" evidence="8">
    <location>
        <begin position="826"/>
        <end position="829"/>
    </location>
</feature>
<proteinExistence type="evidence at protein level"/>
<reference evidence="7" key="1">
    <citation type="journal article" date="2018" name="J. Biol. Chem.">
        <title>Analysis of a vinculin homolog in a sponge (phylum Porifera) reveals that vertebrate-like cell adhesions emerged early in animal evolution.</title>
        <authorList>
            <person name="Miller P.W."/>
            <person name="Pokutta S."/>
            <person name="Mitchell J.M."/>
            <person name="Chodaparambil J.V."/>
            <person name="Clarke D.N."/>
            <person name="Nelson W.J."/>
            <person name="Weis W.I."/>
            <person name="Nichols S.A."/>
        </authorList>
    </citation>
    <scope>NUCLEOTIDE SEQUENCE [MRNA]</scope>
    <scope>X-RAY CRYSTALLOGRAPHY (2.30 ANGSTROMS)</scope>
    <scope>FUNCTION</scope>
    <scope>SUBUNIT</scope>
    <scope>INTERACTION WITH TLN</scope>
    <scope>SUBCELLULAR LOCATION</scope>
    <scope>TISSUE SPECIFICITY</scope>
</reference>
<comment type="function">
    <text evidence="3">Actin filament (F-actin)-binding protein which may play a role in cell-cell adhesion.</text>
</comment>
<comment type="subunit">
    <text evidence="3">Monomer. Interacts with TLN (talin); the interaction facilitates VIN1 binding to F-actin.</text>
</comment>
<comment type="subcellular location">
    <subcellularLocation>
        <location evidence="3">Cytoplasm</location>
        <location evidence="3">Cell cortex</location>
    </subcellularLocation>
    <subcellularLocation>
        <location evidence="3">Cell projection</location>
        <location evidence="3">Filopodium</location>
    </subcellularLocation>
    <subcellularLocation>
        <location evidence="3">Cytoplasm</location>
        <location evidence="3">Cytoskeleton</location>
    </subcellularLocation>
    <text evidence="3">Localizes to points of cell-cell contact in the pinacoderm. Localizes to the base of the microvillar collar in choanocytes. Detected in filopodial extensions in migratory cells of the mesohyl. Colocalizes with F-actin.</text>
</comment>
<comment type="tissue specificity">
    <text evidence="3">Expressed in epithelial tissues, specifically the pinacoderm (outer epithelium) and choanoderm (feeding epithelium) (at protein level). Also detected in migratory cells of the mesohyl (at protein level).</text>
</comment>
<comment type="similarity">
    <text evidence="5">Belongs to the vinculin/alpha-catenin family.</text>
</comment>
<evidence type="ECO:0000255" key="1"/>
<evidence type="ECO:0000256" key="2">
    <source>
        <dbReference type="SAM" id="MobiDB-lite"/>
    </source>
</evidence>
<evidence type="ECO:0000269" key="3">
    <source>
    </source>
</evidence>
<evidence type="ECO:0000303" key="4">
    <source>
    </source>
</evidence>
<evidence type="ECO:0000305" key="5"/>
<evidence type="ECO:0000312" key="6">
    <source>
        <dbReference type="EMBL" id="AYN71345.1"/>
    </source>
</evidence>
<evidence type="ECO:0007744" key="7">
    <source>
        <dbReference type="PDB" id="6BFI"/>
    </source>
</evidence>
<evidence type="ECO:0007829" key="8">
    <source>
        <dbReference type="PDB" id="6BFI"/>
    </source>
</evidence>
<keyword id="KW-0002">3D-structure</keyword>
<keyword id="KW-0009">Actin-binding</keyword>
<keyword id="KW-0966">Cell projection</keyword>
<keyword id="KW-0175">Coiled coil</keyword>
<keyword id="KW-0963">Cytoplasm</keyword>
<keyword id="KW-0206">Cytoskeleton</keyword>
<organism>
    <name type="scientific">Oscarella pearsei</name>
    <name type="common">Sponge</name>
    <dbReference type="NCBI Taxonomy" id="1940113"/>
    <lineage>
        <taxon>Eukaryota</taxon>
        <taxon>Metazoa</taxon>
        <taxon>Porifera</taxon>
        <taxon>Homoscleromorpha</taxon>
        <taxon>Homosclerophorida</taxon>
        <taxon>Oscarellidae</taxon>
        <taxon>Oscarella</taxon>
    </lineage>
</organism>
<protein>
    <recommendedName>
        <fullName evidence="4">Vinculin</fullName>
    </recommendedName>
</protein>